<evidence type="ECO:0000255" key="1">
    <source>
        <dbReference type="HAMAP-Rule" id="MF_04060"/>
    </source>
</evidence>
<evidence type="ECO:0000256" key="2">
    <source>
        <dbReference type="SAM" id="MobiDB-lite"/>
    </source>
</evidence>
<organism>
    <name type="scientific">Snake adenovirus serotype 1</name>
    <name type="common">SnAdV-1</name>
    <dbReference type="NCBI Taxonomy" id="189830"/>
    <lineage>
        <taxon>Viruses</taxon>
        <taxon>Varidnaviria</taxon>
        <taxon>Bamfordvirae</taxon>
        <taxon>Preplasmiviricota</taxon>
        <taxon>Tectiliviricetes</taxon>
        <taxon>Rowavirales</taxon>
        <taxon>Adenoviridae</taxon>
        <taxon>Atadenovirus</taxon>
        <taxon>Snake atadenovirus A</taxon>
    </lineage>
</organism>
<keyword id="KW-0143">Chaperone</keyword>
<keyword id="KW-1262">Eukaryotic host gene expression shutoff by virus</keyword>
<keyword id="KW-1193">Eukaryotic host translation shutoff by virus</keyword>
<keyword id="KW-1035">Host cytoplasm</keyword>
<keyword id="KW-1190">Host gene expression shutoff by virus</keyword>
<keyword id="KW-0945">Host-virus interaction</keyword>
<keyword id="KW-1075">Inhibition of eukaryotic host translation factors by virus</keyword>
<keyword id="KW-0426">Late protein</keyword>
<keyword id="KW-0488">Methylation</keyword>
<keyword id="KW-0597">Phosphoprotein</keyword>
<keyword id="KW-1185">Reference proteome</keyword>
<keyword id="KW-0694">RNA-binding</keyword>
<keyword id="KW-1155">Translational shunt</keyword>
<keyword id="KW-0813">Transport</keyword>
<organismHost>
    <name type="scientific">Pantherophis guttatus</name>
    <name type="common">Corn snake</name>
    <name type="synonym">Elaphe guttata</name>
    <dbReference type="NCBI Taxonomy" id="94885"/>
</organismHost>
<comment type="function">
    <text evidence="1">Protein that inhibits host translation while promoting late viral translation by ribosome shunting. Blocks host cap-dependent translation by binding to eIF4G, displacing MKNK1 from cap initiation complexes and preventing EIF4E phosphorylation. Binds to the tripartite leader sequence of viral late mRNAs and recruits host eIF4G, PABPC1/poly-A binding protein and 40S ribosomes subunits on viral mRNAs, allowing ribosome shunting and efficient translation of late viral mRNAs even though conventional translation via ribosome scanning from the cap has been shut off in the host cell. During assembly, acts as a chaperone protein that helps hexon proteins assembly into trimers.</text>
</comment>
<comment type="subunit">
    <text evidence="1">Monomer. Interacts with hexon protein; this interaction allows chaperoning and trimerization of hexon proteins. Interacts (via N-terminus) with host initiation factor EIF4G (via C-terminus). Interacts (via RRM domain) with viral mRNAs that contain the tripartite leader; this interaction allows ribosome shunting and expression of viral late mRNAs.</text>
</comment>
<comment type="subcellular location">
    <subcellularLocation>
        <location evidence="1">Host cytoplasm</location>
    </subcellularLocation>
</comment>
<comment type="induction">
    <text evidence="1">Expressed in the late phase of the viral replicative cycle.</text>
</comment>
<comment type="PTM">
    <text evidence="1">Might be cleaved by the viral protease.</text>
</comment>
<comment type="PTM">
    <text evidence="1">Phosphorylated. Tyrosine phosphorylation enhances preferential binding to tripartite leader mRNAs and allows ribosome shunting.</text>
</comment>
<comment type="PTM">
    <text evidence="1">Methylated. Asymmetric dimethylation by host PRMT1 of the Arg/Gly-rich region may regulate shutoff protein binding to hexon and promote the capsid assembly in the nucleus.</text>
</comment>
<comment type="miscellaneous">
    <text evidence="1">All late proteins expressed from the major late promoter are produced by alternative splicing and alternative polyadenylation of the same gene giving rise to non-overlapping ORFs. A leader sequence is present in the N-terminus of all these mRNAs and is recognized by the viral shutoff protein to provide expression although conventional translation via ribosome scanning from the cap has been shut off in the host cell.</text>
</comment>
<comment type="similarity">
    <text evidence="1">Belongs to the adenoviridae shutoff protein family.</text>
</comment>
<reference key="1">
    <citation type="journal article" date="2002" name="J. Gen. Virol.">
        <title>Genetic analysis of an adenovirus isolated from corn snake (Elaphe guttata) implies common origin with the members of the proposed new genus Atadenovirus.</title>
        <authorList>
            <person name="Farkas S.L."/>
            <person name="Benko M."/>
            <person name="Elo P.T."/>
            <person name="Ursu K."/>
            <person name="Dan A."/>
            <person name="Ahne W."/>
            <person name="Harrach B."/>
        </authorList>
    </citation>
    <scope>NUCLEOTIDE SEQUENCE [GENOMIC DNA]</scope>
</reference>
<feature type="chain" id="PRO_0000425937" description="Shutoff protein">
    <location>
        <begin position="1"/>
        <end position="679"/>
    </location>
</feature>
<feature type="domain" description="RRM" evidence="1">
    <location>
        <begin position="235"/>
        <end position="353"/>
    </location>
</feature>
<feature type="region of interest" description="Binding to host EIF4G" evidence="1">
    <location>
        <begin position="178"/>
        <end position="232"/>
    </location>
</feature>
<feature type="region of interest" description="Disordered" evidence="2">
    <location>
        <begin position="552"/>
        <end position="679"/>
    </location>
</feature>
<feature type="compositionally biased region" description="Basic and acidic residues" evidence="2">
    <location>
        <begin position="661"/>
        <end position="679"/>
    </location>
</feature>
<feature type="modified residue" description="Phosphotyrosine; by host" evidence="1">
    <location>
        <position position="252"/>
    </location>
</feature>
<feature type="modified residue" description="Phosphotyrosine; by host" evidence="1">
    <location>
        <position position="564"/>
    </location>
</feature>
<accession>A9CB91</accession>
<proteinExistence type="inferred from homology"/>
<name>SHUT_ADES1</name>
<dbReference type="EMBL" id="DQ106414">
    <property type="protein sequence ID" value="ABA47241.1"/>
    <property type="molecule type" value="Genomic_DNA"/>
</dbReference>
<dbReference type="RefSeq" id="YP_001552258.1">
    <property type="nucleotide sequence ID" value="NC_009989.1"/>
</dbReference>
<dbReference type="SMR" id="A9CB91"/>
<dbReference type="KEGG" id="vg:10973872"/>
<dbReference type="OrthoDB" id="2556at10239"/>
<dbReference type="Proteomes" id="UP000136605">
    <property type="component" value="Genome"/>
</dbReference>
<dbReference type="GO" id="GO:0043657">
    <property type="term" value="C:host cell"/>
    <property type="evidence" value="ECO:0007669"/>
    <property type="project" value="GOC"/>
</dbReference>
<dbReference type="GO" id="GO:0030430">
    <property type="term" value="C:host cell cytoplasm"/>
    <property type="evidence" value="ECO:0007669"/>
    <property type="project" value="UniProtKB-SubCell"/>
</dbReference>
<dbReference type="GO" id="GO:0003723">
    <property type="term" value="F:RNA binding"/>
    <property type="evidence" value="ECO:0007669"/>
    <property type="project" value="UniProtKB-UniRule"/>
</dbReference>
<dbReference type="GO" id="GO:0019060">
    <property type="term" value="P:intracellular transport of viral protein in host cell"/>
    <property type="evidence" value="ECO:0007669"/>
    <property type="project" value="UniProtKB-UniRule"/>
</dbReference>
<dbReference type="GO" id="GO:0039657">
    <property type="term" value="P:symbiont-mediated suppression of host gene expression"/>
    <property type="evidence" value="ECO:0007669"/>
    <property type="project" value="UniProtKB-UniRule"/>
</dbReference>
<dbReference type="GO" id="GO:0039606">
    <property type="term" value="P:symbiont-mediated suppression of host translation initiation"/>
    <property type="evidence" value="ECO:0007669"/>
    <property type="project" value="UniProtKB-KW"/>
</dbReference>
<dbReference type="GO" id="GO:0039704">
    <property type="term" value="P:viral translational shunt"/>
    <property type="evidence" value="ECO:0000250"/>
    <property type="project" value="UniProtKB"/>
</dbReference>
<dbReference type="HAMAP" id="MF_04060">
    <property type="entry name" value="ADV_SHUT"/>
    <property type="match status" value="1"/>
</dbReference>
<dbReference type="InterPro" id="IPR003381">
    <property type="entry name" value="L4"/>
</dbReference>
<dbReference type="Pfam" id="PF02438">
    <property type="entry name" value="Adeno_100"/>
    <property type="match status" value="1"/>
</dbReference>
<gene>
    <name evidence="1" type="primary">L4</name>
</gene>
<protein>
    <recommendedName>
        <fullName evidence="1">Shutoff protein</fullName>
    </recommendedName>
    <alternativeName>
        <fullName evidence="1">100 kDa protein</fullName>
        <shortName evidence="1">p100K</shortName>
    </alternativeName>
    <alternativeName>
        <fullName evidence="1">100K-chaperone protein</fullName>
    </alternativeName>
    <alternativeName>
        <fullName evidence="1">L4-100K</fullName>
    </alternativeName>
    <alternativeName>
        <fullName evidence="1">Shutoff protein 100K</fullName>
    </alternativeName>
</protein>
<sequence>MAAEGERQNLLSKHLERQVKILQSICKNDSEACNLLDLGYILEKNLFAPADSRKADSGPDPQLNFFPPFLTPECLALHYPFFLTTSIPPSCKGNRSGTDTYSQFCSRSSCLEDIPDPSEWDDSLGNVSLMAELKENQKLAPLEEDSPRTTAVDESKCSSKQSYSYPALTFPPQVQKILFDYLIGESQDPNDLDSEYKLAFTDEDLPQEGQAEKTKQRETLGAVATFGAVLLSIQRLFTHPVVIKNTQESLHYTFLHGFVRMVHLLTEVNLSEFVTFHGLTHRNRLNNPVQHRQLEGADRFDYILDTIYLYLVFAWQTAMDIWSQTIDEETERNLRERVKSLKPELAGANYAEACSLVSNTVFPPLLREALVVNIPDFVNQTQLANFRLFINNKSNVPASVCPALPSDFIPLTYEESHPVLWAHVMLLRLAAFLLNHGQYVQAPDESSISLPLCDCNLCAPHRMPCYNPMLLNEILSIGKFEVRGPDTEGKGFSLTPQVFANAYMEKFYSEDFHPHQVVLYKDDKAQFKTEPTAAVIREPKLLALIRESQTRREKSILKRGGGRYLDPQTGEVLGESSHGIGEELQDGPSYGEKPSHDLPSYGKQNPVAGRGLQAAGERVRRDAGSPSQPTEQLGRRTPQRGGTGRDKRGRGRGGRSATPDPRQETAEKESLQGTRRESS</sequence>